<accession>Q10318</accession>
<accession>P78903</accession>
<dbReference type="EC" id="4.2.1.9" evidence="2"/>
<dbReference type="EMBL" id="CU329670">
    <property type="protein sequence ID" value="CAA93689.1"/>
    <property type="molecule type" value="Genomic_DNA"/>
</dbReference>
<dbReference type="EMBL" id="D89254">
    <property type="protein sequence ID" value="BAA13915.1"/>
    <property type="molecule type" value="mRNA"/>
</dbReference>
<dbReference type="PIR" id="T37858">
    <property type="entry name" value="T37858"/>
</dbReference>
<dbReference type="PIR" id="T43179">
    <property type="entry name" value="T43179"/>
</dbReference>
<dbReference type="SMR" id="Q10318"/>
<dbReference type="BioGRID" id="278631">
    <property type="interactions" value="4"/>
</dbReference>
<dbReference type="FunCoup" id="Q10318">
    <property type="interactions" value="190"/>
</dbReference>
<dbReference type="STRING" id="284812.Q10318"/>
<dbReference type="iPTMnet" id="Q10318"/>
<dbReference type="PaxDb" id="4896-SPAC17G8.06c.1"/>
<dbReference type="EnsemblFungi" id="SPAC17G8.06c.1">
    <property type="protein sequence ID" value="SPAC17G8.06c.1:pep"/>
    <property type="gene ID" value="SPAC17G8.06c"/>
</dbReference>
<dbReference type="KEGG" id="spo:2542155"/>
<dbReference type="PomBase" id="SPAC17G8.06c"/>
<dbReference type="VEuPathDB" id="FungiDB:SPAC17G8.06c"/>
<dbReference type="eggNOG" id="KOG2448">
    <property type="taxonomic scope" value="Eukaryota"/>
</dbReference>
<dbReference type="HOGENOM" id="CLU_014271_4_2_1"/>
<dbReference type="InParanoid" id="Q10318"/>
<dbReference type="OMA" id="STQGRNM"/>
<dbReference type="PhylomeDB" id="Q10318"/>
<dbReference type="UniPathway" id="UPA00047">
    <property type="reaction ID" value="UER00057"/>
</dbReference>
<dbReference type="UniPathway" id="UPA00049">
    <property type="reaction ID" value="UER00061"/>
</dbReference>
<dbReference type="PRO" id="PR:Q10318"/>
<dbReference type="Proteomes" id="UP000002485">
    <property type="component" value="Chromosome I"/>
</dbReference>
<dbReference type="GO" id="GO:0005759">
    <property type="term" value="C:mitochondrial matrix"/>
    <property type="evidence" value="ECO:0000305"/>
    <property type="project" value="PomBase"/>
</dbReference>
<dbReference type="GO" id="GO:0005739">
    <property type="term" value="C:mitochondrion"/>
    <property type="evidence" value="ECO:0007005"/>
    <property type="project" value="PomBase"/>
</dbReference>
<dbReference type="GO" id="GO:0051537">
    <property type="term" value="F:2 iron, 2 sulfur cluster binding"/>
    <property type="evidence" value="ECO:0007669"/>
    <property type="project" value="UniProtKB-KW"/>
</dbReference>
<dbReference type="GO" id="GO:0004160">
    <property type="term" value="F:dihydroxy-acid dehydratase activity"/>
    <property type="evidence" value="ECO:0000315"/>
    <property type="project" value="PomBase"/>
</dbReference>
<dbReference type="GO" id="GO:0046872">
    <property type="term" value="F:metal ion binding"/>
    <property type="evidence" value="ECO:0007669"/>
    <property type="project" value="UniProtKB-KW"/>
</dbReference>
<dbReference type="GO" id="GO:0009082">
    <property type="term" value="P:branched-chain amino acid biosynthetic process"/>
    <property type="evidence" value="ECO:0000318"/>
    <property type="project" value="GO_Central"/>
</dbReference>
<dbReference type="GO" id="GO:0009097">
    <property type="term" value="P:isoleucine biosynthetic process"/>
    <property type="evidence" value="ECO:0000315"/>
    <property type="project" value="PomBase"/>
</dbReference>
<dbReference type="GO" id="GO:0009098">
    <property type="term" value="P:L-leucine biosynthetic process"/>
    <property type="evidence" value="ECO:0000315"/>
    <property type="project" value="PomBase"/>
</dbReference>
<dbReference type="GO" id="GO:0009099">
    <property type="term" value="P:L-valine biosynthetic process"/>
    <property type="evidence" value="ECO:0000315"/>
    <property type="project" value="PomBase"/>
</dbReference>
<dbReference type="FunFam" id="3.50.30.80:FF:000001">
    <property type="entry name" value="Dihydroxy-acid dehydratase"/>
    <property type="match status" value="1"/>
</dbReference>
<dbReference type="Gene3D" id="3.50.30.80">
    <property type="entry name" value="IlvD/EDD C-terminal domain-like"/>
    <property type="match status" value="1"/>
</dbReference>
<dbReference type="HAMAP" id="MF_00012">
    <property type="entry name" value="IlvD"/>
    <property type="match status" value="1"/>
</dbReference>
<dbReference type="InterPro" id="IPR050165">
    <property type="entry name" value="DHAD_IlvD/Edd"/>
</dbReference>
<dbReference type="InterPro" id="IPR042096">
    <property type="entry name" value="Dihydro-acid_dehy_C"/>
</dbReference>
<dbReference type="InterPro" id="IPR004404">
    <property type="entry name" value="DihydroxyA_deHydtase"/>
</dbReference>
<dbReference type="InterPro" id="IPR020558">
    <property type="entry name" value="DiOHA_6PGluconate_deHydtase_CS"/>
</dbReference>
<dbReference type="InterPro" id="IPR056740">
    <property type="entry name" value="ILV_EDD_C"/>
</dbReference>
<dbReference type="InterPro" id="IPR000581">
    <property type="entry name" value="ILV_EDD_N"/>
</dbReference>
<dbReference type="InterPro" id="IPR037237">
    <property type="entry name" value="IlvD/EDD_N"/>
</dbReference>
<dbReference type="NCBIfam" id="TIGR00110">
    <property type="entry name" value="ilvD"/>
    <property type="match status" value="1"/>
</dbReference>
<dbReference type="NCBIfam" id="NF002068">
    <property type="entry name" value="PRK00911.1"/>
    <property type="match status" value="1"/>
</dbReference>
<dbReference type="PANTHER" id="PTHR21000">
    <property type="entry name" value="DIHYDROXY-ACID DEHYDRATASE DAD"/>
    <property type="match status" value="1"/>
</dbReference>
<dbReference type="PANTHER" id="PTHR21000:SF5">
    <property type="entry name" value="DIHYDROXY-ACID DEHYDRATASE, MITOCHONDRIAL"/>
    <property type="match status" value="1"/>
</dbReference>
<dbReference type="Pfam" id="PF24877">
    <property type="entry name" value="ILV_EDD_C"/>
    <property type="match status" value="1"/>
</dbReference>
<dbReference type="Pfam" id="PF00920">
    <property type="entry name" value="ILVD_EDD_N"/>
    <property type="match status" value="1"/>
</dbReference>
<dbReference type="SUPFAM" id="SSF143975">
    <property type="entry name" value="IlvD/EDD N-terminal domain-like"/>
    <property type="match status" value="1"/>
</dbReference>
<dbReference type="SUPFAM" id="SSF52016">
    <property type="entry name" value="LeuD/IlvD-like"/>
    <property type="match status" value="1"/>
</dbReference>
<dbReference type="PROSITE" id="PS00886">
    <property type="entry name" value="ILVD_EDD_1"/>
    <property type="match status" value="1"/>
</dbReference>
<dbReference type="PROSITE" id="PS00887">
    <property type="entry name" value="ILVD_EDD_2"/>
    <property type="match status" value="1"/>
</dbReference>
<protein>
    <recommendedName>
        <fullName evidence="2">Dihydroxy-acid dehydratase, mitochondrial</fullName>
        <shortName evidence="2">DAD</shortName>
        <ecNumber evidence="2">4.2.1.9</ecNumber>
    </recommendedName>
</protein>
<feature type="transit peptide" description="Mitochondrion" evidence="4">
    <location>
        <begin position="1"/>
        <end position="18"/>
    </location>
</feature>
<feature type="chain" id="PRO_0000015635" description="Dihydroxy-acid dehydratase, mitochondrial">
    <location>
        <begin position="19"/>
        <end position="598"/>
    </location>
</feature>
<feature type="active site" description="Proton acceptor" evidence="3">
    <location>
        <position position="511"/>
    </location>
</feature>
<feature type="binding site" evidence="3">
    <location>
        <position position="84"/>
    </location>
    <ligand>
        <name>[2Fe-2S] cluster</name>
        <dbReference type="ChEBI" id="CHEBI:190135"/>
    </ligand>
</feature>
<feature type="binding site" evidence="3">
    <location>
        <position position="116"/>
    </location>
    <ligand>
        <name>Mg(2+)</name>
        <dbReference type="ChEBI" id="CHEBI:18420"/>
    </ligand>
</feature>
<feature type="binding site" evidence="3">
    <location>
        <position position="157"/>
    </location>
    <ligand>
        <name>[2Fe-2S] cluster</name>
        <dbReference type="ChEBI" id="CHEBI:190135"/>
    </ligand>
</feature>
<feature type="binding site" evidence="3">
    <location>
        <position position="158"/>
    </location>
    <ligand>
        <name>Mg(2+)</name>
        <dbReference type="ChEBI" id="CHEBI:18420"/>
    </ligand>
</feature>
<feature type="binding site" evidence="3">
    <location>
        <position position="232"/>
    </location>
    <ligand>
        <name>[2Fe-2S] cluster</name>
        <dbReference type="ChEBI" id="CHEBI:190135"/>
    </ligand>
</feature>
<feature type="binding site" evidence="3">
    <location>
        <position position="485"/>
    </location>
    <ligand>
        <name>Mg(2+)</name>
        <dbReference type="ChEBI" id="CHEBI:18420"/>
    </ligand>
</feature>
<feature type="sequence conflict" description="In Ref. 2; BAA13915." evidence="5" ref="2">
    <original>I</original>
    <variation>V</variation>
    <location>
        <position position="196"/>
    </location>
</feature>
<feature type="sequence conflict" description="In Ref. 2; BAA13915." evidence="5" ref="2">
    <original>Y</original>
    <variation>F</variation>
    <location>
        <position position="205"/>
    </location>
</feature>
<feature type="sequence conflict" description="In Ref. 2; BAA13915." evidence="5" ref="2">
    <original>E</original>
    <variation>A</variation>
    <location>
        <position position="270"/>
    </location>
</feature>
<feature type="sequence conflict" description="In Ref. 2; BAA13915." evidence="5" ref="2">
    <original>K</original>
    <variation>E</variation>
    <location>
        <position position="285"/>
    </location>
</feature>
<feature type="sequence conflict" description="In Ref. 2; BAA13915." evidence="5" ref="2">
    <original>M</original>
    <variation>L</variation>
    <location>
        <position position="290"/>
    </location>
</feature>
<feature type="sequence conflict" description="In Ref. 2; BAA13915." evidence="5" ref="2">
    <original>S</original>
    <variation>F</variation>
    <location>
        <position position="293"/>
    </location>
</feature>
<feature type="sequence conflict" description="In Ref. 2; BAA13915." evidence="5" ref="2">
    <original>I</original>
    <variation>T</variation>
    <location>
        <position position="318"/>
    </location>
</feature>
<feature type="sequence conflict" description="In Ref. 2; BAA13915." evidence="5" ref="2">
    <original>G</original>
    <variation>D</variation>
    <location>
        <position position="399"/>
    </location>
</feature>
<feature type="sequence conflict" description="In Ref. 2; BAA13915." evidence="5" ref="2">
    <original>L</original>
    <variation>V</variation>
    <location>
        <position position="552"/>
    </location>
</feature>
<keyword id="KW-0001">2Fe-2S</keyword>
<keyword id="KW-0028">Amino-acid biosynthesis</keyword>
<keyword id="KW-0100">Branched-chain amino acid biosynthesis</keyword>
<keyword id="KW-0408">Iron</keyword>
<keyword id="KW-0411">Iron-sulfur</keyword>
<keyword id="KW-0456">Lyase</keyword>
<keyword id="KW-0460">Magnesium</keyword>
<keyword id="KW-0479">Metal-binding</keyword>
<keyword id="KW-0496">Mitochondrion</keyword>
<keyword id="KW-1185">Reference proteome</keyword>
<keyword id="KW-0809">Transit peptide</keyword>
<organism>
    <name type="scientific">Schizosaccharomyces pombe (strain 972 / ATCC 24843)</name>
    <name type="common">Fission yeast</name>
    <dbReference type="NCBI Taxonomy" id="284812"/>
    <lineage>
        <taxon>Eukaryota</taxon>
        <taxon>Fungi</taxon>
        <taxon>Dikarya</taxon>
        <taxon>Ascomycota</taxon>
        <taxon>Taphrinomycotina</taxon>
        <taxon>Schizosaccharomycetes</taxon>
        <taxon>Schizosaccharomycetales</taxon>
        <taxon>Schizosaccharomycetaceae</taxon>
        <taxon>Schizosaccharomyces</taxon>
    </lineage>
</organism>
<reference key="1">
    <citation type="journal article" date="2002" name="Nature">
        <title>The genome sequence of Schizosaccharomyces pombe.</title>
        <authorList>
            <person name="Wood V."/>
            <person name="Gwilliam R."/>
            <person name="Rajandream M.A."/>
            <person name="Lyne M.H."/>
            <person name="Lyne R."/>
            <person name="Stewart A."/>
            <person name="Sgouros J.G."/>
            <person name="Peat N."/>
            <person name="Hayles J."/>
            <person name="Baker S.G."/>
            <person name="Basham D."/>
            <person name="Bowman S."/>
            <person name="Brooks K."/>
            <person name="Brown D."/>
            <person name="Brown S."/>
            <person name="Chillingworth T."/>
            <person name="Churcher C.M."/>
            <person name="Collins M."/>
            <person name="Connor R."/>
            <person name="Cronin A."/>
            <person name="Davis P."/>
            <person name="Feltwell T."/>
            <person name="Fraser A."/>
            <person name="Gentles S."/>
            <person name="Goble A."/>
            <person name="Hamlin N."/>
            <person name="Harris D.E."/>
            <person name="Hidalgo J."/>
            <person name="Hodgson G."/>
            <person name="Holroyd S."/>
            <person name="Hornsby T."/>
            <person name="Howarth S."/>
            <person name="Huckle E.J."/>
            <person name="Hunt S."/>
            <person name="Jagels K."/>
            <person name="James K.D."/>
            <person name="Jones L."/>
            <person name="Jones M."/>
            <person name="Leather S."/>
            <person name="McDonald S."/>
            <person name="McLean J."/>
            <person name="Mooney P."/>
            <person name="Moule S."/>
            <person name="Mungall K.L."/>
            <person name="Murphy L.D."/>
            <person name="Niblett D."/>
            <person name="Odell C."/>
            <person name="Oliver K."/>
            <person name="O'Neil S."/>
            <person name="Pearson D."/>
            <person name="Quail M.A."/>
            <person name="Rabbinowitsch E."/>
            <person name="Rutherford K.M."/>
            <person name="Rutter S."/>
            <person name="Saunders D."/>
            <person name="Seeger K."/>
            <person name="Sharp S."/>
            <person name="Skelton J."/>
            <person name="Simmonds M.N."/>
            <person name="Squares R."/>
            <person name="Squares S."/>
            <person name="Stevens K."/>
            <person name="Taylor K."/>
            <person name="Taylor R.G."/>
            <person name="Tivey A."/>
            <person name="Walsh S.V."/>
            <person name="Warren T."/>
            <person name="Whitehead S."/>
            <person name="Woodward J.R."/>
            <person name="Volckaert G."/>
            <person name="Aert R."/>
            <person name="Robben J."/>
            <person name="Grymonprez B."/>
            <person name="Weltjens I."/>
            <person name="Vanstreels E."/>
            <person name="Rieger M."/>
            <person name="Schaefer M."/>
            <person name="Mueller-Auer S."/>
            <person name="Gabel C."/>
            <person name="Fuchs M."/>
            <person name="Duesterhoeft A."/>
            <person name="Fritzc C."/>
            <person name="Holzer E."/>
            <person name="Moestl D."/>
            <person name="Hilbert H."/>
            <person name="Borzym K."/>
            <person name="Langer I."/>
            <person name="Beck A."/>
            <person name="Lehrach H."/>
            <person name="Reinhardt R."/>
            <person name="Pohl T.M."/>
            <person name="Eger P."/>
            <person name="Zimmermann W."/>
            <person name="Wedler H."/>
            <person name="Wambutt R."/>
            <person name="Purnelle B."/>
            <person name="Goffeau A."/>
            <person name="Cadieu E."/>
            <person name="Dreano S."/>
            <person name="Gloux S."/>
            <person name="Lelaure V."/>
            <person name="Mottier S."/>
            <person name="Galibert F."/>
            <person name="Aves S.J."/>
            <person name="Xiang Z."/>
            <person name="Hunt C."/>
            <person name="Moore K."/>
            <person name="Hurst S.M."/>
            <person name="Lucas M."/>
            <person name="Rochet M."/>
            <person name="Gaillardin C."/>
            <person name="Tallada V.A."/>
            <person name="Garzon A."/>
            <person name="Thode G."/>
            <person name="Daga R.R."/>
            <person name="Cruzado L."/>
            <person name="Jimenez J."/>
            <person name="Sanchez M."/>
            <person name="del Rey F."/>
            <person name="Benito J."/>
            <person name="Dominguez A."/>
            <person name="Revuelta J.L."/>
            <person name="Moreno S."/>
            <person name="Armstrong J."/>
            <person name="Forsburg S.L."/>
            <person name="Cerutti L."/>
            <person name="Lowe T."/>
            <person name="McCombie W.R."/>
            <person name="Paulsen I."/>
            <person name="Potashkin J."/>
            <person name="Shpakovski G.V."/>
            <person name="Ussery D."/>
            <person name="Barrell B.G."/>
            <person name="Nurse P."/>
        </authorList>
    </citation>
    <scope>NUCLEOTIDE SEQUENCE [LARGE SCALE GENOMIC DNA]</scope>
    <source>
        <strain>972 / ATCC 24843</strain>
    </source>
</reference>
<reference key="2">
    <citation type="journal article" date="1997" name="DNA Res.">
        <title>Identification of open reading frames in Schizosaccharomyces pombe cDNAs.</title>
        <authorList>
            <person name="Yoshioka S."/>
            <person name="Kato K."/>
            <person name="Nakai K."/>
            <person name="Okayama H."/>
            <person name="Nojima H."/>
        </authorList>
    </citation>
    <scope>NUCLEOTIDE SEQUENCE [LARGE SCALE MRNA] OF 86-598</scope>
    <source>
        <strain>PR745</strain>
    </source>
</reference>
<comment type="function">
    <text evidence="2">Dihydroxyacid dehydratase that catalyzes the third step in the common pathway leading to biosynthesis of branched-chain amino acids. Catalyzes the dehydration of (2R,3R)-2,3-dihydroxy-3-methylpentanoate (2,3-dihydroxy-3-methylvalerate) into 2-oxo-3-methylpentanoate (2-oxo-3-methylvalerate) and of (2R)-2,3-dihydroxy-3-methylbutanoate (2,3-dihydroxyisovalerate) into 2-oxo-3-methylbutanoate (2-oxoisovalerate), the penultimate precursor to L-isoleucine and L-valine, respectively.</text>
</comment>
<comment type="catalytic activity">
    <reaction evidence="2">
        <text>(2R)-2,3-dihydroxy-3-methylbutanoate = 3-methyl-2-oxobutanoate + H2O</text>
        <dbReference type="Rhea" id="RHEA:24809"/>
        <dbReference type="ChEBI" id="CHEBI:11851"/>
        <dbReference type="ChEBI" id="CHEBI:15377"/>
        <dbReference type="ChEBI" id="CHEBI:49072"/>
        <dbReference type="EC" id="4.2.1.9"/>
    </reaction>
    <physiologicalReaction direction="left-to-right" evidence="2">
        <dbReference type="Rhea" id="RHEA:24810"/>
    </physiologicalReaction>
</comment>
<comment type="catalytic activity">
    <reaction evidence="1">
        <text>(2R,3R)-2,3-dihydroxy-3-methylpentanoate = (S)-3-methyl-2-oxopentanoate + H2O</text>
        <dbReference type="Rhea" id="RHEA:27694"/>
        <dbReference type="ChEBI" id="CHEBI:15377"/>
        <dbReference type="ChEBI" id="CHEBI:35146"/>
        <dbReference type="ChEBI" id="CHEBI:49258"/>
        <dbReference type="EC" id="4.2.1.9"/>
    </reaction>
    <physiologicalReaction direction="left-to-right" evidence="1">
        <dbReference type="Rhea" id="RHEA:27695"/>
    </physiologicalReaction>
</comment>
<comment type="cofactor">
    <cofactor evidence="2">
        <name>[2Fe-2S] cluster</name>
        <dbReference type="ChEBI" id="CHEBI:190135"/>
    </cofactor>
    <text evidence="2">Binds 1 [2Fe-2S] cluster per subunit.</text>
</comment>
<comment type="cofactor">
    <cofactor evidence="3">
        <name>Mg(2+)</name>
        <dbReference type="ChEBI" id="CHEBI:18420"/>
    </cofactor>
</comment>
<comment type="pathway">
    <text evidence="5">Amino-acid biosynthesis; L-isoleucine biosynthesis; L-isoleucine from 2-oxobutanoate: step 3/4.</text>
</comment>
<comment type="pathway">
    <text evidence="5">Amino-acid biosynthesis; L-valine biosynthesis; L-valine from pyruvate: step 3/4.</text>
</comment>
<comment type="subcellular location">
    <subcellularLocation>
        <location evidence="2">Mitochondrion</location>
    </subcellularLocation>
</comment>
<comment type="similarity">
    <text evidence="5">Belongs to the IlvD/Edd family.</text>
</comment>
<evidence type="ECO:0000250" key="1">
    <source>
        <dbReference type="UniProtKB" id="P05791"/>
    </source>
</evidence>
<evidence type="ECO:0000250" key="2">
    <source>
        <dbReference type="UniProtKB" id="P39522"/>
    </source>
</evidence>
<evidence type="ECO:0000250" key="3">
    <source>
        <dbReference type="UniProtKB" id="P9WKJ5"/>
    </source>
</evidence>
<evidence type="ECO:0000255" key="4"/>
<evidence type="ECO:0000305" key="5"/>
<gene>
    <name type="ORF">SPAC17G8.06c</name>
</gene>
<name>ILV3_SCHPO</name>
<sequence>MMFCKLLRCQNGIASKRAALSLKGFKTSSINLVEKKLNKYSETITGPKSQGASQAMLYATGLNEEDMKKPQVGIASCWYEGNPCNMHLLDLGRRVKEGVKKAGLTGFQFNTIGVSDGISMGTTGMRYSLQSREIIADSIETVMQGQWYDANVSIPGCDKNMPGCLIAMGRFNRPSIMVYGGSIRAGHSPCQNNAPIDIVSAFQSYGEFITGKIDEPTRHDIIRHACPGGGACGGMYTANTMASCAEAMGMTLPGSSSYLAGSPEKFAECEAAGSAIKRLLVDDIKPRDIMTRSAFENAMVLTMTLGGSTNSVLHLIAIAKSVGITLTLDDFQAVSNRTPFIADMKPSGKYVMEDLFAIGGIPSVLKYLHAEGLIDGSNITVTGKTLAENLRGFKDLAEGQKIIRPLSNPIKTEGHLRVLRGSLAPEGSVAKITGKEGLNFTGKARVFDAENDFIAALERGEFKKGEKTVVIIRFEGPKGGPGMPEMLKPSSAIMGAGLGKDVALLTDGRFSGGSHGFLIGHVDPEAQVGGPIALVQDGDVIEINAVKNTLDLMVDEKEMARRRSVWKAPPLKYQQGTLLKYARNVSTASKGAVTDSLE</sequence>
<proteinExistence type="evidence at transcript level"/>